<evidence type="ECO:0000255" key="1">
    <source>
        <dbReference type="HAMAP-Rule" id="MF_00354"/>
    </source>
</evidence>
<reference key="1">
    <citation type="submission" date="2009-06" db="EMBL/GenBank/DDBJ databases">
        <title>Complete sequence of chromosome of Geopacillus sp. WCH70.</title>
        <authorList>
            <consortium name="US DOE Joint Genome Institute"/>
            <person name="Lucas S."/>
            <person name="Copeland A."/>
            <person name="Lapidus A."/>
            <person name="Glavina del Rio T."/>
            <person name="Dalin E."/>
            <person name="Tice H."/>
            <person name="Bruce D."/>
            <person name="Goodwin L."/>
            <person name="Pitluck S."/>
            <person name="Chertkov O."/>
            <person name="Brettin T."/>
            <person name="Detter J.C."/>
            <person name="Han C."/>
            <person name="Larimer F."/>
            <person name="Land M."/>
            <person name="Hauser L."/>
            <person name="Kyrpides N."/>
            <person name="Mikhailova N."/>
            <person name="Brumm P."/>
            <person name="Mead D.A."/>
            <person name="Richardson P."/>
        </authorList>
    </citation>
    <scope>NUCLEOTIDE SEQUENCE [LARGE SCALE GENOMIC DNA]</scope>
    <source>
        <strain>WCH70</strain>
    </source>
</reference>
<name>IDI2_GEOSW</name>
<dbReference type="EC" id="5.3.3.2" evidence="1"/>
<dbReference type="EMBL" id="CP001638">
    <property type="protein sequence ID" value="ACS24878.1"/>
    <property type="molecule type" value="Genomic_DNA"/>
</dbReference>
<dbReference type="SMR" id="C5D3G3"/>
<dbReference type="STRING" id="471223.GWCH70_2168"/>
<dbReference type="KEGG" id="gwc:GWCH70_2168"/>
<dbReference type="eggNOG" id="COG1304">
    <property type="taxonomic scope" value="Bacteria"/>
</dbReference>
<dbReference type="HOGENOM" id="CLU_065515_0_0_9"/>
<dbReference type="OrthoDB" id="9795032at2"/>
<dbReference type="GO" id="GO:0005737">
    <property type="term" value="C:cytoplasm"/>
    <property type="evidence" value="ECO:0007669"/>
    <property type="project" value="UniProtKB-SubCell"/>
</dbReference>
<dbReference type="GO" id="GO:0010181">
    <property type="term" value="F:FMN binding"/>
    <property type="evidence" value="ECO:0007669"/>
    <property type="project" value="UniProtKB-UniRule"/>
</dbReference>
<dbReference type="GO" id="GO:0004452">
    <property type="term" value="F:isopentenyl-diphosphate delta-isomerase activity"/>
    <property type="evidence" value="ECO:0007669"/>
    <property type="project" value="UniProtKB-UniRule"/>
</dbReference>
<dbReference type="GO" id="GO:0000287">
    <property type="term" value="F:magnesium ion binding"/>
    <property type="evidence" value="ECO:0007669"/>
    <property type="project" value="UniProtKB-UniRule"/>
</dbReference>
<dbReference type="GO" id="GO:0070402">
    <property type="term" value="F:NADPH binding"/>
    <property type="evidence" value="ECO:0007669"/>
    <property type="project" value="UniProtKB-UniRule"/>
</dbReference>
<dbReference type="GO" id="GO:0016491">
    <property type="term" value="F:oxidoreductase activity"/>
    <property type="evidence" value="ECO:0007669"/>
    <property type="project" value="InterPro"/>
</dbReference>
<dbReference type="GO" id="GO:0008299">
    <property type="term" value="P:isoprenoid biosynthetic process"/>
    <property type="evidence" value="ECO:0007669"/>
    <property type="project" value="UniProtKB-UniRule"/>
</dbReference>
<dbReference type="CDD" id="cd02811">
    <property type="entry name" value="IDI-2_FMN"/>
    <property type="match status" value="1"/>
</dbReference>
<dbReference type="Gene3D" id="3.20.20.70">
    <property type="entry name" value="Aldolase class I"/>
    <property type="match status" value="1"/>
</dbReference>
<dbReference type="HAMAP" id="MF_00354">
    <property type="entry name" value="Idi_2"/>
    <property type="match status" value="1"/>
</dbReference>
<dbReference type="InterPro" id="IPR013785">
    <property type="entry name" value="Aldolase_TIM"/>
</dbReference>
<dbReference type="InterPro" id="IPR000262">
    <property type="entry name" value="FMN-dep_DH"/>
</dbReference>
<dbReference type="InterPro" id="IPR011179">
    <property type="entry name" value="IPdP_isomerase"/>
</dbReference>
<dbReference type="NCBIfam" id="TIGR02151">
    <property type="entry name" value="IPP_isom_2"/>
    <property type="match status" value="1"/>
</dbReference>
<dbReference type="PANTHER" id="PTHR43665">
    <property type="entry name" value="ISOPENTENYL-DIPHOSPHATE DELTA-ISOMERASE"/>
    <property type="match status" value="1"/>
</dbReference>
<dbReference type="PANTHER" id="PTHR43665:SF1">
    <property type="entry name" value="ISOPENTENYL-DIPHOSPHATE DELTA-ISOMERASE"/>
    <property type="match status" value="1"/>
</dbReference>
<dbReference type="Pfam" id="PF01070">
    <property type="entry name" value="FMN_dh"/>
    <property type="match status" value="1"/>
</dbReference>
<dbReference type="PIRSF" id="PIRSF003314">
    <property type="entry name" value="IPP_isomerase"/>
    <property type="match status" value="1"/>
</dbReference>
<dbReference type="SMART" id="SM01240">
    <property type="entry name" value="IMPDH"/>
    <property type="match status" value="1"/>
</dbReference>
<dbReference type="SUPFAM" id="SSF51395">
    <property type="entry name" value="FMN-linked oxidoreductases"/>
    <property type="match status" value="1"/>
</dbReference>
<comment type="function">
    <text evidence="1">Involved in the biosynthesis of isoprenoids. Catalyzes the 1,3-allylic rearrangement of the homoallylic substrate isopentenyl (IPP) to its allylic isomer, dimethylallyl diphosphate (DMAPP).</text>
</comment>
<comment type="catalytic activity">
    <reaction evidence="1">
        <text>isopentenyl diphosphate = dimethylallyl diphosphate</text>
        <dbReference type="Rhea" id="RHEA:23284"/>
        <dbReference type="ChEBI" id="CHEBI:57623"/>
        <dbReference type="ChEBI" id="CHEBI:128769"/>
        <dbReference type="EC" id="5.3.3.2"/>
    </reaction>
</comment>
<comment type="cofactor">
    <cofactor evidence="1">
        <name>FMN</name>
        <dbReference type="ChEBI" id="CHEBI:58210"/>
    </cofactor>
</comment>
<comment type="cofactor">
    <cofactor evidence="1">
        <name>NADPH</name>
        <dbReference type="ChEBI" id="CHEBI:57783"/>
    </cofactor>
</comment>
<comment type="cofactor">
    <cofactor evidence="1">
        <name>Mg(2+)</name>
        <dbReference type="ChEBI" id="CHEBI:18420"/>
    </cofactor>
</comment>
<comment type="subunit">
    <text evidence="1">Homooctamer. Dimer of tetramers.</text>
</comment>
<comment type="subcellular location">
    <subcellularLocation>
        <location evidence="1">Cytoplasm</location>
    </subcellularLocation>
</comment>
<comment type="similarity">
    <text evidence="1">Belongs to the IPP isomerase type 2 family.</text>
</comment>
<gene>
    <name evidence="1" type="primary">fni</name>
    <name type="ordered locus">GWCH70_2168</name>
</gene>
<proteinExistence type="inferred from homology"/>
<keyword id="KW-0963">Cytoplasm</keyword>
<keyword id="KW-0285">Flavoprotein</keyword>
<keyword id="KW-0288">FMN</keyword>
<keyword id="KW-0413">Isomerase</keyword>
<keyword id="KW-0414">Isoprene biosynthesis</keyword>
<keyword id="KW-0460">Magnesium</keyword>
<keyword id="KW-0479">Metal-binding</keyword>
<keyword id="KW-0521">NADP</keyword>
<sequence>MSRAKRKIEHIQHALSTADQGASGFDDITFVHQSLPDVRMNDIHLHTALGELSLSSPFFINAMTGGGGKQTFEINKGLAEAAKHCRIAMAVGSQTSALRDNKQRGTFEIVRKVNKNGIIFANIGSEATVDDAKRAVDMIEADGLQIHLNVVQELVMPEGDRDFTGVLLRIEQIVQAVQVPVIVKEVGFGMSKETASRLEEVGVKIIDVGGLGGTNFARIENKRRSNIITYFNDWGIPTAASIVEVAQTSPSLVVIGSGGVRTALDAAKAIALGASAVGMAGPLLRTLVEQGVEALVASIEELHHDLTLIMGALGAKTIDKLQRVPLVIRGDTHHWLTERGFDTKVYSCR</sequence>
<protein>
    <recommendedName>
        <fullName evidence="1">Isopentenyl-diphosphate delta-isomerase</fullName>
        <shortName evidence="1">IPP isomerase</shortName>
        <ecNumber evidence="1">5.3.3.2</ecNumber>
    </recommendedName>
    <alternativeName>
        <fullName evidence="1">Isopentenyl diphosphate:dimethylallyl diphosphate isomerase</fullName>
    </alternativeName>
    <alternativeName>
        <fullName evidence="1">Isopentenyl pyrophosphate isomerase</fullName>
    </alternativeName>
    <alternativeName>
        <fullName evidence="1">Type 2 isopentenyl diphosphate isomerase</fullName>
        <shortName evidence="1">IDI-2</shortName>
    </alternativeName>
</protein>
<organism>
    <name type="scientific">Geobacillus sp. (strain WCH70)</name>
    <dbReference type="NCBI Taxonomy" id="471223"/>
    <lineage>
        <taxon>Bacteria</taxon>
        <taxon>Bacillati</taxon>
        <taxon>Bacillota</taxon>
        <taxon>Bacilli</taxon>
        <taxon>Bacillales</taxon>
        <taxon>Anoxybacillaceae</taxon>
        <taxon>Geobacillus</taxon>
    </lineage>
</organism>
<feature type="chain" id="PRO_1000205349" description="Isopentenyl-diphosphate delta-isomerase">
    <location>
        <begin position="1"/>
        <end position="349"/>
    </location>
</feature>
<feature type="binding site" evidence="1">
    <location>
        <begin position="6"/>
        <end position="7"/>
    </location>
    <ligand>
        <name>substrate</name>
    </ligand>
</feature>
<feature type="binding site" evidence="1">
    <location>
        <begin position="62"/>
        <end position="64"/>
    </location>
    <ligand>
        <name>FMN</name>
        <dbReference type="ChEBI" id="CHEBI:58210"/>
    </ligand>
</feature>
<feature type="binding site" evidence="1">
    <location>
        <position position="93"/>
    </location>
    <ligand>
        <name>FMN</name>
        <dbReference type="ChEBI" id="CHEBI:58210"/>
    </ligand>
</feature>
<feature type="binding site" evidence="1">
    <location>
        <position position="122"/>
    </location>
    <ligand>
        <name>FMN</name>
        <dbReference type="ChEBI" id="CHEBI:58210"/>
    </ligand>
</feature>
<feature type="binding site" evidence="1">
    <location>
        <position position="152"/>
    </location>
    <ligand>
        <name>substrate</name>
    </ligand>
</feature>
<feature type="binding site" evidence="1">
    <location>
        <position position="153"/>
    </location>
    <ligand>
        <name>Mg(2+)</name>
        <dbReference type="ChEBI" id="CHEBI:18420"/>
    </ligand>
</feature>
<feature type="binding site" evidence="1">
    <location>
        <position position="184"/>
    </location>
    <ligand>
        <name>FMN</name>
        <dbReference type="ChEBI" id="CHEBI:58210"/>
    </ligand>
</feature>
<feature type="binding site" evidence="1">
    <location>
        <position position="214"/>
    </location>
    <ligand>
        <name>FMN</name>
        <dbReference type="ChEBI" id="CHEBI:58210"/>
    </ligand>
</feature>
<feature type="binding site" evidence="1">
    <location>
        <begin position="259"/>
        <end position="261"/>
    </location>
    <ligand>
        <name>FMN</name>
        <dbReference type="ChEBI" id="CHEBI:58210"/>
    </ligand>
</feature>
<feature type="binding site" evidence="1">
    <location>
        <begin position="280"/>
        <end position="281"/>
    </location>
    <ligand>
        <name>FMN</name>
        <dbReference type="ChEBI" id="CHEBI:58210"/>
    </ligand>
</feature>
<accession>C5D3G3</accession>